<protein>
    <recommendedName>
        <fullName evidence="1">LL-diaminopimelate aminotransferase</fullName>
        <shortName evidence="1">DAP-AT</shortName>
        <shortName evidence="1">DAP-aminotransferase</shortName>
        <shortName evidence="1">LL-DAP-aminotransferase</shortName>
        <ecNumber evidence="1">2.6.1.83</ecNumber>
    </recommendedName>
</protein>
<dbReference type="EC" id="2.6.1.83" evidence="1"/>
<dbReference type="EMBL" id="CP001287">
    <property type="protein sequence ID" value="ACK64586.1"/>
    <property type="molecule type" value="Genomic_DNA"/>
</dbReference>
<dbReference type="RefSeq" id="WP_012593863.1">
    <property type="nucleotide sequence ID" value="NC_011726.1"/>
</dbReference>
<dbReference type="SMR" id="B7JVL5"/>
<dbReference type="STRING" id="41431.PCC8801_0494"/>
<dbReference type="KEGG" id="cyp:PCC8801_0494"/>
<dbReference type="eggNOG" id="COG0436">
    <property type="taxonomic scope" value="Bacteria"/>
</dbReference>
<dbReference type="HOGENOM" id="CLU_051433_0_0_3"/>
<dbReference type="OrthoDB" id="9802328at2"/>
<dbReference type="UniPathway" id="UPA00034">
    <property type="reaction ID" value="UER00466"/>
</dbReference>
<dbReference type="Proteomes" id="UP000008204">
    <property type="component" value="Chromosome"/>
</dbReference>
<dbReference type="GO" id="GO:0010285">
    <property type="term" value="F:L,L-diaminopimelate aminotransferase activity"/>
    <property type="evidence" value="ECO:0007669"/>
    <property type="project" value="UniProtKB-UniRule"/>
</dbReference>
<dbReference type="GO" id="GO:0030170">
    <property type="term" value="F:pyridoxal phosphate binding"/>
    <property type="evidence" value="ECO:0007669"/>
    <property type="project" value="UniProtKB-UniRule"/>
</dbReference>
<dbReference type="GO" id="GO:0033362">
    <property type="term" value="P:lysine biosynthetic process via diaminopimelate, diaminopimelate-aminotransferase pathway"/>
    <property type="evidence" value="ECO:0007669"/>
    <property type="project" value="UniProtKB-UniRule"/>
</dbReference>
<dbReference type="CDD" id="cd00609">
    <property type="entry name" value="AAT_like"/>
    <property type="match status" value="1"/>
</dbReference>
<dbReference type="FunFam" id="3.40.640.10:FF:000099">
    <property type="entry name" value="LL-diaminopimelate aminotransferase, chloroplastic"/>
    <property type="match status" value="1"/>
</dbReference>
<dbReference type="Gene3D" id="3.90.1150.10">
    <property type="entry name" value="Aspartate Aminotransferase, domain 1"/>
    <property type="match status" value="1"/>
</dbReference>
<dbReference type="Gene3D" id="3.40.640.10">
    <property type="entry name" value="Type I PLP-dependent aspartate aminotransferase-like (Major domain)"/>
    <property type="match status" value="1"/>
</dbReference>
<dbReference type="HAMAP" id="MF_01642">
    <property type="entry name" value="DapL_aminotrans_1"/>
    <property type="match status" value="1"/>
</dbReference>
<dbReference type="InterPro" id="IPR004839">
    <property type="entry name" value="Aminotransferase_I/II_large"/>
</dbReference>
<dbReference type="InterPro" id="IPR019942">
    <property type="entry name" value="DapL/ALD1"/>
</dbReference>
<dbReference type="InterPro" id="IPR015424">
    <property type="entry name" value="PyrdxlP-dep_Trfase"/>
</dbReference>
<dbReference type="InterPro" id="IPR015421">
    <property type="entry name" value="PyrdxlP-dep_Trfase_major"/>
</dbReference>
<dbReference type="InterPro" id="IPR015422">
    <property type="entry name" value="PyrdxlP-dep_Trfase_small"/>
</dbReference>
<dbReference type="NCBIfam" id="TIGR03542">
    <property type="entry name" value="DAPAT_plant"/>
    <property type="match status" value="1"/>
</dbReference>
<dbReference type="PANTHER" id="PTHR43144">
    <property type="entry name" value="AMINOTRANSFERASE"/>
    <property type="match status" value="1"/>
</dbReference>
<dbReference type="Pfam" id="PF00155">
    <property type="entry name" value="Aminotran_1_2"/>
    <property type="match status" value="1"/>
</dbReference>
<dbReference type="SUPFAM" id="SSF53383">
    <property type="entry name" value="PLP-dependent transferases"/>
    <property type="match status" value="1"/>
</dbReference>
<keyword id="KW-0032">Aminotransferase</keyword>
<keyword id="KW-0663">Pyridoxal phosphate</keyword>
<keyword id="KW-1185">Reference proteome</keyword>
<keyword id="KW-0808">Transferase</keyword>
<comment type="function">
    <text evidence="1">Involved in the synthesis of meso-diaminopimelate (m-DAP or DL-DAP), required for both lysine and peptidoglycan biosynthesis. Catalyzes the direct conversion of tetrahydrodipicolinate to LL-diaminopimelate.</text>
</comment>
<comment type="catalytic activity">
    <reaction evidence="1">
        <text>(2S,6S)-2,6-diaminopimelate + 2-oxoglutarate = (S)-2,3,4,5-tetrahydrodipicolinate + L-glutamate + H2O + H(+)</text>
        <dbReference type="Rhea" id="RHEA:23988"/>
        <dbReference type="ChEBI" id="CHEBI:15377"/>
        <dbReference type="ChEBI" id="CHEBI:15378"/>
        <dbReference type="ChEBI" id="CHEBI:16810"/>
        <dbReference type="ChEBI" id="CHEBI:16845"/>
        <dbReference type="ChEBI" id="CHEBI:29985"/>
        <dbReference type="ChEBI" id="CHEBI:57609"/>
        <dbReference type="EC" id="2.6.1.83"/>
    </reaction>
</comment>
<comment type="cofactor">
    <cofactor evidence="1">
        <name>pyridoxal 5'-phosphate</name>
        <dbReference type="ChEBI" id="CHEBI:597326"/>
    </cofactor>
</comment>
<comment type="pathway">
    <text evidence="1">Amino-acid biosynthesis; L-lysine biosynthesis via DAP pathway; LL-2,6-diaminopimelate from (S)-tetrahydrodipicolinate (aminotransferase route): step 1/1.</text>
</comment>
<comment type="subunit">
    <text evidence="1">Homodimer.</text>
</comment>
<comment type="similarity">
    <text evidence="1">Belongs to the class-I pyridoxal-phosphate-dependent aminotransferase family. LL-diaminopimelate aminotransferase subfamily.</text>
</comment>
<evidence type="ECO:0000255" key="1">
    <source>
        <dbReference type="HAMAP-Rule" id="MF_01642"/>
    </source>
</evidence>
<accession>B7JVL5</accession>
<gene>
    <name evidence="1" type="primary">dapL</name>
    <name type="ordered locus">PCC8801_0494</name>
</gene>
<reference key="1">
    <citation type="journal article" date="2011" name="MBio">
        <title>Novel metabolic attributes of the genus Cyanothece, comprising a group of unicellular nitrogen-fixing Cyanobacteria.</title>
        <authorList>
            <person name="Bandyopadhyay A."/>
            <person name="Elvitigala T."/>
            <person name="Welsh E."/>
            <person name="Stockel J."/>
            <person name="Liberton M."/>
            <person name="Min H."/>
            <person name="Sherman L.A."/>
            <person name="Pakrasi H.B."/>
        </authorList>
    </citation>
    <scope>NUCLEOTIDE SEQUENCE [LARGE SCALE GENOMIC DNA]</scope>
    <source>
        <strain>PCC 8801 / RF-1</strain>
    </source>
</reference>
<name>DAPAT_RIPO1</name>
<proteinExistence type="inferred from homology"/>
<organism>
    <name type="scientific">Rippkaea orientalis (strain PCC 8801 / RF-1)</name>
    <name type="common">Cyanothece sp. (strain PCC 8801)</name>
    <dbReference type="NCBI Taxonomy" id="41431"/>
    <lineage>
        <taxon>Bacteria</taxon>
        <taxon>Bacillati</taxon>
        <taxon>Cyanobacteriota</taxon>
        <taxon>Cyanophyceae</taxon>
        <taxon>Oscillatoriophycideae</taxon>
        <taxon>Chroococcales</taxon>
        <taxon>Aphanothecaceae</taxon>
        <taxon>Rippkaea</taxon>
        <taxon>Rippkaea orientalis</taxon>
    </lineage>
</organism>
<sequence length="411" mass="45363">MATINDNYLKLKAGYLFPEIARRVKTFAEANPDAKIIKLGIGDVTEPLPEACRTAMIKAIEDMGDRGTFKGYGPEQGYEWLREKIATHDFQARNCDVDASEIFVSDGAKCDTGNILDIFGKNNKIAVTDPVYPVYVDTNVMAGHTGEVNDKGEYEGLVYLPINAENNFIAEIPSQKVDIIYLCFPNNPTGATATKDYLKNWVDYAKANGSIIFFDAAYEAFITDSSLPHSIYEIEGARDCAIEFRSFSKNAGFTGTRCALTVVPKTLTAKASDGSDVELWKLWNRRQSTKFNGVSYIVQRGAEAVYSEAGKAQVQALISFYLENAQIICDKLKGAGFEVYGGVNAPYIWLKTPHNLSSWDFFDKLLQTANVVGTPGSGFGAAGEGYFRISAFNSRENVLEAMKRITSQFHL</sequence>
<feature type="chain" id="PRO_1000186863" description="LL-diaminopimelate aminotransferase">
    <location>
        <begin position="1"/>
        <end position="411"/>
    </location>
</feature>
<feature type="binding site" evidence="1">
    <location>
        <position position="15"/>
    </location>
    <ligand>
        <name>substrate</name>
    </ligand>
</feature>
<feature type="binding site" evidence="1">
    <location>
        <position position="42"/>
    </location>
    <ligand>
        <name>substrate</name>
    </ligand>
</feature>
<feature type="binding site" evidence="1">
    <location>
        <position position="72"/>
    </location>
    <ligand>
        <name>pyridoxal 5'-phosphate</name>
        <dbReference type="ChEBI" id="CHEBI:597326"/>
    </ligand>
</feature>
<feature type="binding site" evidence="1">
    <location>
        <begin position="108"/>
        <end position="109"/>
    </location>
    <ligand>
        <name>pyridoxal 5'-phosphate</name>
        <dbReference type="ChEBI" id="CHEBI:597326"/>
    </ligand>
</feature>
<feature type="binding site" evidence="1">
    <location>
        <position position="109"/>
    </location>
    <ligand>
        <name>substrate</name>
    </ligand>
</feature>
<feature type="binding site" evidence="1">
    <location>
        <position position="132"/>
    </location>
    <ligand>
        <name>pyridoxal 5'-phosphate</name>
        <dbReference type="ChEBI" id="CHEBI:597326"/>
    </ligand>
</feature>
<feature type="binding site" evidence="1">
    <location>
        <position position="132"/>
    </location>
    <ligand>
        <name>substrate</name>
    </ligand>
</feature>
<feature type="binding site" evidence="1">
    <location>
        <position position="187"/>
    </location>
    <ligand>
        <name>pyridoxal 5'-phosphate</name>
        <dbReference type="ChEBI" id="CHEBI:597326"/>
    </ligand>
</feature>
<feature type="binding site" evidence="1">
    <location>
        <position position="187"/>
    </location>
    <ligand>
        <name>substrate</name>
    </ligand>
</feature>
<feature type="binding site" evidence="1">
    <location>
        <position position="218"/>
    </location>
    <ligand>
        <name>pyridoxal 5'-phosphate</name>
        <dbReference type="ChEBI" id="CHEBI:597326"/>
    </ligand>
</feature>
<feature type="binding site" evidence="1">
    <location>
        <begin position="246"/>
        <end position="248"/>
    </location>
    <ligand>
        <name>pyridoxal 5'-phosphate</name>
        <dbReference type="ChEBI" id="CHEBI:597326"/>
    </ligand>
</feature>
<feature type="binding site" evidence="1">
    <location>
        <position position="257"/>
    </location>
    <ligand>
        <name>pyridoxal 5'-phosphate</name>
        <dbReference type="ChEBI" id="CHEBI:597326"/>
    </ligand>
</feature>
<feature type="binding site" evidence="1">
    <location>
        <position position="292"/>
    </location>
    <ligand>
        <name>pyridoxal 5'-phosphate</name>
        <dbReference type="ChEBI" id="CHEBI:597326"/>
    </ligand>
</feature>
<feature type="binding site" evidence="1">
    <location>
        <position position="292"/>
    </location>
    <ligand>
        <name>substrate</name>
    </ligand>
</feature>
<feature type="binding site" evidence="1">
    <location>
        <position position="388"/>
    </location>
    <ligand>
        <name>substrate</name>
    </ligand>
</feature>
<feature type="modified residue" description="N6-(pyridoxal phosphate)lysine" evidence="1">
    <location>
        <position position="249"/>
    </location>
</feature>